<dbReference type="EMBL" id="CT573326">
    <property type="protein sequence ID" value="CAK16908.1"/>
    <property type="molecule type" value="Genomic_DNA"/>
</dbReference>
<dbReference type="RefSeq" id="WP_011535279.1">
    <property type="nucleotide sequence ID" value="NC_008027.1"/>
</dbReference>
<dbReference type="SMR" id="Q1I627"/>
<dbReference type="STRING" id="384676.PSEEN4219"/>
<dbReference type="GeneID" id="32807226"/>
<dbReference type="KEGG" id="pen:PSEEN4219"/>
<dbReference type="eggNOG" id="COG0264">
    <property type="taxonomic scope" value="Bacteria"/>
</dbReference>
<dbReference type="HOGENOM" id="CLU_047155_0_2_6"/>
<dbReference type="OrthoDB" id="9808348at2"/>
<dbReference type="Proteomes" id="UP000000658">
    <property type="component" value="Chromosome"/>
</dbReference>
<dbReference type="GO" id="GO:0005737">
    <property type="term" value="C:cytoplasm"/>
    <property type="evidence" value="ECO:0007669"/>
    <property type="project" value="UniProtKB-SubCell"/>
</dbReference>
<dbReference type="GO" id="GO:0003746">
    <property type="term" value="F:translation elongation factor activity"/>
    <property type="evidence" value="ECO:0007669"/>
    <property type="project" value="UniProtKB-UniRule"/>
</dbReference>
<dbReference type="CDD" id="cd14275">
    <property type="entry name" value="UBA_EF-Ts"/>
    <property type="match status" value="1"/>
</dbReference>
<dbReference type="FunFam" id="1.10.286.20:FF:000001">
    <property type="entry name" value="Elongation factor Ts"/>
    <property type="match status" value="1"/>
</dbReference>
<dbReference type="FunFam" id="1.10.8.10:FF:000001">
    <property type="entry name" value="Elongation factor Ts"/>
    <property type="match status" value="1"/>
</dbReference>
<dbReference type="Gene3D" id="1.10.286.20">
    <property type="match status" value="1"/>
</dbReference>
<dbReference type="Gene3D" id="1.10.8.10">
    <property type="entry name" value="DNA helicase RuvA subunit, C-terminal domain"/>
    <property type="match status" value="1"/>
</dbReference>
<dbReference type="Gene3D" id="3.30.479.20">
    <property type="entry name" value="Elongation factor Ts, dimerisation domain"/>
    <property type="match status" value="2"/>
</dbReference>
<dbReference type="HAMAP" id="MF_00050">
    <property type="entry name" value="EF_Ts"/>
    <property type="match status" value="1"/>
</dbReference>
<dbReference type="InterPro" id="IPR036402">
    <property type="entry name" value="EF-Ts_dimer_sf"/>
</dbReference>
<dbReference type="InterPro" id="IPR001816">
    <property type="entry name" value="Transl_elong_EFTs/EF1B"/>
</dbReference>
<dbReference type="InterPro" id="IPR014039">
    <property type="entry name" value="Transl_elong_EFTs/EF1B_dimer"/>
</dbReference>
<dbReference type="InterPro" id="IPR018101">
    <property type="entry name" value="Transl_elong_Ts_CS"/>
</dbReference>
<dbReference type="InterPro" id="IPR009060">
    <property type="entry name" value="UBA-like_sf"/>
</dbReference>
<dbReference type="NCBIfam" id="TIGR00116">
    <property type="entry name" value="tsf"/>
    <property type="match status" value="1"/>
</dbReference>
<dbReference type="PANTHER" id="PTHR11741">
    <property type="entry name" value="ELONGATION FACTOR TS"/>
    <property type="match status" value="1"/>
</dbReference>
<dbReference type="PANTHER" id="PTHR11741:SF0">
    <property type="entry name" value="ELONGATION FACTOR TS, MITOCHONDRIAL"/>
    <property type="match status" value="1"/>
</dbReference>
<dbReference type="Pfam" id="PF00889">
    <property type="entry name" value="EF_TS"/>
    <property type="match status" value="1"/>
</dbReference>
<dbReference type="SUPFAM" id="SSF54713">
    <property type="entry name" value="Elongation factor Ts (EF-Ts), dimerisation domain"/>
    <property type="match status" value="2"/>
</dbReference>
<dbReference type="SUPFAM" id="SSF46934">
    <property type="entry name" value="UBA-like"/>
    <property type="match status" value="1"/>
</dbReference>
<dbReference type="PROSITE" id="PS01126">
    <property type="entry name" value="EF_TS_1"/>
    <property type="match status" value="1"/>
</dbReference>
<dbReference type="PROSITE" id="PS01127">
    <property type="entry name" value="EF_TS_2"/>
    <property type="match status" value="1"/>
</dbReference>
<comment type="function">
    <text evidence="1">Associates with the EF-Tu.GDP complex and induces the exchange of GDP to GTP. It remains bound to the aminoacyl-tRNA.EF-Tu.GTP complex up to the GTP hydrolysis stage on the ribosome.</text>
</comment>
<comment type="subcellular location">
    <subcellularLocation>
        <location evidence="1">Cytoplasm</location>
    </subcellularLocation>
</comment>
<comment type="similarity">
    <text evidence="1">Belongs to the EF-Ts family.</text>
</comment>
<evidence type="ECO:0000255" key="1">
    <source>
        <dbReference type="HAMAP-Rule" id="MF_00050"/>
    </source>
</evidence>
<name>EFTS_PSEE4</name>
<reference key="1">
    <citation type="journal article" date="2006" name="Nat. Biotechnol.">
        <title>Complete genome sequence of the entomopathogenic and metabolically versatile soil bacterium Pseudomonas entomophila.</title>
        <authorList>
            <person name="Vodovar N."/>
            <person name="Vallenet D."/>
            <person name="Cruveiller S."/>
            <person name="Rouy Z."/>
            <person name="Barbe V."/>
            <person name="Acosta C."/>
            <person name="Cattolico L."/>
            <person name="Jubin C."/>
            <person name="Lajus A."/>
            <person name="Segurens B."/>
            <person name="Vacherie B."/>
            <person name="Wincker P."/>
            <person name="Weissenbach J."/>
            <person name="Lemaitre B."/>
            <person name="Medigue C."/>
            <person name="Boccard F."/>
        </authorList>
    </citation>
    <scope>NUCLEOTIDE SEQUENCE [LARGE SCALE GENOMIC DNA]</scope>
    <source>
        <strain>L48</strain>
    </source>
</reference>
<accession>Q1I627</accession>
<proteinExistence type="inferred from homology"/>
<sequence>MAAITAALVKELRERTGEGMMDCKKALEKAGGDIEKAIDDMRASGAIKAAKKAGNVAAEGAIAVKTDGKAAVLLEVNSQTDFLALQDDFKNFVAESIEEAFAQKLTDAAPLIASRESAREALVAKCGENVNIRRLVRVEGDVVGAYLHGNKIGAVVVLKGGDVELAKNIAMHVAASNPEFLDASEISAEAIEREKNVFLQLNADKIAGKPENIVENMINGRITKFKAEASLKEQAFVMNPEVKVGELAKKAGAEIVSFTYFKVGEGIEKPVDNFAEEVAAQVAAAKQ</sequence>
<feature type="chain" id="PRO_1000006153" description="Elongation factor Ts">
    <location>
        <begin position="1"/>
        <end position="287"/>
    </location>
</feature>
<feature type="region of interest" description="Involved in Mg(2+) ion dislocation from EF-Tu" evidence="1">
    <location>
        <begin position="80"/>
        <end position="83"/>
    </location>
</feature>
<organism>
    <name type="scientific">Pseudomonas entomophila (strain L48)</name>
    <dbReference type="NCBI Taxonomy" id="384676"/>
    <lineage>
        <taxon>Bacteria</taxon>
        <taxon>Pseudomonadati</taxon>
        <taxon>Pseudomonadota</taxon>
        <taxon>Gammaproteobacteria</taxon>
        <taxon>Pseudomonadales</taxon>
        <taxon>Pseudomonadaceae</taxon>
        <taxon>Pseudomonas</taxon>
    </lineage>
</organism>
<protein>
    <recommendedName>
        <fullName evidence="1">Elongation factor Ts</fullName>
        <shortName evidence="1">EF-Ts</shortName>
    </recommendedName>
</protein>
<keyword id="KW-0963">Cytoplasm</keyword>
<keyword id="KW-0251">Elongation factor</keyword>
<keyword id="KW-0648">Protein biosynthesis</keyword>
<gene>
    <name evidence="1" type="primary">tsf</name>
    <name type="ordered locus">PSEEN4219</name>
</gene>